<feature type="chain" id="PRO_1000215754" description="Purine nucleoside phosphorylase DeoD-type">
    <location>
        <begin position="1"/>
        <end position="236"/>
    </location>
</feature>
<feature type="active site" description="Proton donor" evidence="2">
    <location>
        <position position="204"/>
    </location>
</feature>
<feature type="binding site" evidence="1">
    <location>
        <position position="4"/>
    </location>
    <ligand>
        <name>a purine D-ribonucleoside</name>
        <dbReference type="ChEBI" id="CHEBI:142355"/>
        <note>ligand shared between dimeric partners</note>
    </ligand>
</feature>
<feature type="binding site" description="in other chain" evidence="1">
    <location>
        <position position="20"/>
    </location>
    <ligand>
        <name>phosphate</name>
        <dbReference type="ChEBI" id="CHEBI:43474"/>
        <note>ligand shared between dimeric partners</note>
    </ligand>
</feature>
<feature type="binding site" description="in other chain" evidence="1">
    <location>
        <position position="24"/>
    </location>
    <ligand>
        <name>phosphate</name>
        <dbReference type="ChEBI" id="CHEBI:43474"/>
        <note>ligand shared between dimeric partners</note>
    </ligand>
</feature>
<feature type="binding site" evidence="1">
    <location>
        <position position="43"/>
    </location>
    <ligand>
        <name>phosphate</name>
        <dbReference type="ChEBI" id="CHEBI:43474"/>
        <note>ligand shared between dimeric partners</note>
    </ligand>
</feature>
<feature type="binding site" description="in other chain" evidence="1">
    <location>
        <begin position="87"/>
        <end position="90"/>
    </location>
    <ligand>
        <name>phosphate</name>
        <dbReference type="ChEBI" id="CHEBI:43474"/>
        <note>ligand shared between dimeric partners</note>
    </ligand>
</feature>
<feature type="binding site" description="in other chain" evidence="1">
    <location>
        <begin position="179"/>
        <end position="181"/>
    </location>
    <ligand>
        <name>a purine D-ribonucleoside</name>
        <dbReference type="ChEBI" id="CHEBI:142355"/>
        <note>ligand shared between dimeric partners</note>
    </ligand>
</feature>
<feature type="binding site" description="in other chain" evidence="1">
    <location>
        <begin position="203"/>
        <end position="204"/>
    </location>
    <ligand>
        <name>a purine D-ribonucleoside</name>
        <dbReference type="ChEBI" id="CHEBI:142355"/>
        <note>ligand shared between dimeric partners</note>
    </ligand>
</feature>
<feature type="site" description="Important for catalytic activity" evidence="2">
    <location>
        <position position="218"/>
    </location>
</feature>
<comment type="function">
    <text evidence="2">Catalyzes the reversible phosphorolytic breakdown of the N-glycosidic bond in the beta-(deoxy)ribonucleoside molecules, with the formation of the corresponding free purine bases and pentose-1-phosphate.</text>
</comment>
<comment type="catalytic activity">
    <reaction evidence="2">
        <text>a purine D-ribonucleoside + phosphate = a purine nucleobase + alpha-D-ribose 1-phosphate</text>
        <dbReference type="Rhea" id="RHEA:19805"/>
        <dbReference type="ChEBI" id="CHEBI:26386"/>
        <dbReference type="ChEBI" id="CHEBI:43474"/>
        <dbReference type="ChEBI" id="CHEBI:57720"/>
        <dbReference type="ChEBI" id="CHEBI:142355"/>
        <dbReference type="EC" id="2.4.2.1"/>
    </reaction>
</comment>
<comment type="catalytic activity">
    <reaction evidence="2">
        <text>a purine 2'-deoxy-D-ribonucleoside + phosphate = a purine nucleobase + 2-deoxy-alpha-D-ribose 1-phosphate</text>
        <dbReference type="Rhea" id="RHEA:36431"/>
        <dbReference type="ChEBI" id="CHEBI:26386"/>
        <dbReference type="ChEBI" id="CHEBI:43474"/>
        <dbReference type="ChEBI" id="CHEBI:57259"/>
        <dbReference type="ChEBI" id="CHEBI:142361"/>
        <dbReference type="EC" id="2.4.2.1"/>
    </reaction>
</comment>
<comment type="subunit">
    <text evidence="2">Homohexamer; trimer of homodimers.</text>
</comment>
<comment type="similarity">
    <text evidence="2">Belongs to the PNP/UDP phosphorylase family.</text>
</comment>
<protein>
    <recommendedName>
        <fullName evidence="2">Purine nucleoside phosphorylase DeoD-type</fullName>
        <shortName evidence="2">PNP</shortName>
        <ecNumber evidence="2">2.4.2.1</ecNumber>
    </recommendedName>
</protein>
<name>DEOD_STRPS</name>
<accession>B2INV3</accession>
<evidence type="ECO:0000250" key="1">
    <source>
        <dbReference type="UniProtKB" id="P50389"/>
    </source>
</evidence>
<evidence type="ECO:0000255" key="2">
    <source>
        <dbReference type="HAMAP-Rule" id="MF_01627"/>
    </source>
</evidence>
<gene>
    <name evidence="2" type="primary">deoD</name>
    <name type="ordered locus">SPCG_0778</name>
</gene>
<proteinExistence type="inferred from homology"/>
<dbReference type="EC" id="2.4.2.1" evidence="2"/>
<dbReference type="EMBL" id="CP001033">
    <property type="protein sequence ID" value="ACB90030.1"/>
    <property type="molecule type" value="Genomic_DNA"/>
</dbReference>
<dbReference type="RefSeq" id="WP_000022084.1">
    <property type="nucleotide sequence ID" value="NC_010582.1"/>
</dbReference>
<dbReference type="SMR" id="B2INV3"/>
<dbReference type="KEGG" id="spw:SPCG_0778"/>
<dbReference type="HOGENOM" id="CLU_068457_2_0_9"/>
<dbReference type="GO" id="GO:0005829">
    <property type="term" value="C:cytosol"/>
    <property type="evidence" value="ECO:0007669"/>
    <property type="project" value="TreeGrafter"/>
</dbReference>
<dbReference type="GO" id="GO:0004731">
    <property type="term" value="F:purine-nucleoside phosphorylase activity"/>
    <property type="evidence" value="ECO:0007669"/>
    <property type="project" value="UniProtKB-UniRule"/>
</dbReference>
<dbReference type="GO" id="GO:0006152">
    <property type="term" value="P:purine nucleoside catabolic process"/>
    <property type="evidence" value="ECO:0007669"/>
    <property type="project" value="TreeGrafter"/>
</dbReference>
<dbReference type="CDD" id="cd09006">
    <property type="entry name" value="PNP_EcPNPI-like"/>
    <property type="match status" value="1"/>
</dbReference>
<dbReference type="Gene3D" id="3.40.50.1580">
    <property type="entry name" value="Nucleoside phosphorylase domain"/>
    <property type="match status" value="1"/>
</dbReference>
<dbReference type="HAMAP" id="MF_01627">
    <property type="entry name" value="Pur_nucleosid_phosp"/>
    <property type="match status" value="1"/>
</dbReference>
<dbReference type="InterPro" id="IPR004402">
    <property type="entry name" value="DeoD-type"/>
</dbReference>
<dbReference type="InterPro" id="IPR018016">
    <property type="entry name" value="Nucleoside_phosphorylase_CS"/>
</dbReference>
<dbReference type="InterPro" id="IPR000845">
    <property type="entry name" value="Nucleoside_phosphorylase_d"/>
</dbReference>
<dbReference type="InterPro" id="IPR035994">
    <property type="entry name" value="Nucleoside_phosphorylase_sf"/>
</dbReference>
<dbReference type="NCBIfam" id="TIGR00107">
    <property type="entry name" value="deoD"/>
    <property type="match status" value="1"/>
</dbReference>
<dbReference type="NCBIfam" id="NF004489">
    <property type="entry name" value="PRK05819.1"/>
    <property type="match status" value="1"/>
</dbReference>
<dbReference type="PANTHER" id="PTHR43691:SF11">
    <property type="entry name" value="FI09636P-RELATED"/>
    <property type="match status" value="1"/>
</dbReference>
<dbReference type="PANTHER" id="PTHR43691">
    <property type="entry name" value="URIDINE PHOSPHORYLASE"/>
    <property type="match status" value="1"/>
</dbReference>
<dbReference type="Pfam" id="PF01048">
    <property type="entry name" value="PNP_UDP_1"/>
    <property type="match status" value="1"/>
</dbReference>
<dbReference type="SUPFAM" id="SSF53167">
    <property type="entry name" value="Purine and uridine phosphorylases"/>
    <property type="match status" value="1"/>
</dbReference>
<dbReference type="PROSITE" id="PS01232">
    <property type="entry name" value="PNP_UDP_1"/>
    <property type="match status" value="1"/>
</dbReference>
<organism>
    <name type="scientific">Streptococcus pneumoniae (strain CGSP14)</name>
    <dbReference type="NCBI Taxonomy" id="516950"/>
    <lineage>
        <taxon>Bacteria</taxon>
        <taxon>Bacillati</taxon>
        <taxon>Bacillota</taxon>
        <taxon>Bacilli</taxon>
        <taxon>Lactobacillales</taxon>
        <taxon>Streptococcaceae</taxon>
        <taxon>Streptococcus</taxon>
    </lineage>
</organism>
<reference key="1">
    <citation type="journal article" date="2009" name="BMC Genomics">
        <title>Genome evolution driven by host adaptations results in a more virulent and antimicrobial-resistant Streptococcus pneumoniae serotype 14.</title>
        <authorList>
            <person name="Ding F."/>
            <person name="Tang P."/>
            <person name="Hsu M.-H."/>
            <person name="Cui P."/>
            <person name="Hu S."/>
            <person name="Yu J."/>
            <person name="Chiu C.-H."/>
        </authorList>
    </citation>
    <scope>NUCLEOTIDE SEQUENCE [LARGE SCALE GENOMIC DNA]</scope>
    <source>
        <strain>CGSP14</strain>
    </source>
</reference>
<sequence>MSIHIAAQQGEIADKILLPGDPLRAKFIAENFLDDAVCFNEVRNMFGYTGTYKGHCVSVMGTGMGMPSISIYARELIVDYGVKKLIRVGTAGSLNEEVHVRELVLAQAAATNSNIVRNDWPQYDFPQIASFDLLDKAYHIAKKLGMTTHVGNVLSSDVFYSNYFEKNIELGKWGVKAVEMEAAALYYLAAQYHVDALAIMTISDSLVNPDEDTTAEERQNTFTDMMKVGLETLIAE</sequence>
<keyword id="KW-0328">Glycosyltransferase</keyword>
<keyword id="KW-0808">Transferase</keyword>